<reference key="1">
    <citation type="journal article" date="1991" name="J. Gen. Virol.">
        <title>Nucleotide sequence of 42 kbp of vaccinia virus strain WR from near the right inverted terminal repeat.</title>
        <authorList>
            <person name="Smith G.L."/>
            <person name="Chan Y.S."/>
            <person name="Howard S.T."/>
        </authorList>
    </citation>
    <scope>NUCLEOTIDE SEQUENCE [GENOMIC DNA]</scope>
</reference>
<reference key="2">
    <citation type="journal article" date="1991" name="Virology">
        <title>Vaccinia virus homologues of the Shope fibroma virus inverted terminal repeat proteins and a discontinuous ORF related to the tumor necrosis factor receptor family.</title>
        <authorList>
            <person name="Howard S.T."/>
            <person name="Chan Y.S."/>
            <person name="Smith G.L."/>
        </authorList>
    </citation>
    <scope>NUCLEOTIDE SEQUENCE [GENOMIC DNA]</scope>
</reference>
<reference key="3">
    <citation type="submission" date="2003-02" db="EMBL/GenBank/DDBJ databases">
        <title>Sequencing of the coding region of Vaccinia-WR to an average 9-fold redundancy and an error rate of 0.16/10kb.</title>
        <authorList>
            <person name="Esposito J.J."/>
            <person name="Frace A.M."/>
            <person name="Sammons S.A."/>
            <person name="Olsen-Rasmussen M."/>
            <person name="Osborne J."/>
            <person name="Wohlhueter R."/>
        </authorList>
    </citation>
    <scope>NUCLEOTIDE SEQUENCE [LARGE SCALE GENOMIC DNA]</scope>
</reference>
<reference key="4">
    <citation type="journal article" date="2002" name="J. Gen. Virol.">
        <title>The vaccinia virus B9R protein is a 6 kDa intracellular protein that is non-essential for virus replication and virulence.</title>
        <authorList>
            <person name="Price N."/>
            <person name="Tscharke D.C."/>
            <person name="Smith G.L."/>
        </authorList>
    </citation>
    <scope>INDUCTION</scope>
</reference>
<organismHost>
    <name type="scientific">Bos taurus</name>
    <name type="common">Bovine</name>
    <dbReference type="NCBI Taxonomy" id="9913"/>
</organismHost>
<keyword id="KW-0426">Late protein</keyword>
<keyword id="KW-1185">Reference proteome</keyword>
<keyword id="KW-0732">Signal</keyword>
<evidence type="ECO:0000255" key="1"/>
<evidence type="ECO:0000269" key="2">
    <source>
    </source>
</evidence>
<evidence type="ECO:0000305" key="3"/>
<organism>
    <name type="scientific">Vaccinia virus (strain Western Reserve)</name>
    <name type="common">VACV</name>
    <name type="synonym">Vaccinia virus (strain WR)</name>
    <dbReference type="NCBI Taxonomy" id="10254"/>
    <lineage>
        <taxon>Viruses</taxon>
        <taxon>Varidnaviria</taxon>
        <taxon>Bamfordvirae</taxon>
        <taxon>Nucleocytoviricota</taxon>
        <taxon>Pokkesviricetes</taxon>
        <taxon>Chitovirales</taxon>
        <taxon>Poxviridae</taxon>
        <taxon>Chordopoxvirinae</taxon>
        <taxon>Orthopoxvirus</taxon>
        <taxon>Vaccinia virus</taxon>
    </lineage>
</organism>
<accession>P24771</accession>
<accession>Q76ZL4</accession>
<sequence length="77" mass="8778">MRSLIIVLLFPSIIYSMSIRQCEKTEEETWGLKIGLCIIAKDFYPERTDCSVHLPTASEGLITEGNGFRDIRNTDKL</sequence>
<name>PG195_VACCW</name>
<dbReference type="EMBL" id="D11079">
    <property type="protein sequence ID" value="BAA01839.1"/>
    <property type="molecule type" value="Genomic_DNA"/>
</dbReference>
<dbReference type="EMBL" id="M58056">
    <property type="protein sequence ID" value="AAA47968.1"/>
    <property type="molecule type" value="Genomic_DNA"/>
</dbReference>
<dbReference type="EMBL" id="AY243312">
    <property type="protein sequence ID" value="AAO89470.1"/>
    <property type="molecule type" value="Genomic_DNA"/>
</dbReference>
<dbReference type="PIR" id="JQ1803">
    <property type="entry name" value="JQ1803"/>
</dbReference>
<dbReference type="RefSeq" id="YP_233073.1">
    <property type="nucleotide sequence ID" value="NC_006998.1"/>
</dbReference>
<dbReference type="SMR" id="P24771"/>
<dbReference type="DNASU" id="3707662"/>
<dbReference type="GeneID" id="3707662"/>
<dbReference type="KEGG" id="vg:3707662"/>
<dbReference type="Proteomes" id="UP000000344">
    <property type="component" value="Genome"/>
</dbReference>
<dbReference type="Gene3D" id="2.60.240.30">
    <property type="match status" value="1"/>
</dbReference>
<dbReference type="InterPro" id="IPR016399">
    <property type="entry name" value="Apoptosis_reg_M-T4"/>
</dbReference>
<dbReference type="InterPro" id="IPR038687">
    <property type="entry name" value="M-T4_sf"/>
</dbReference>
<dbReference type="InterPro" id="IPR007580">
    <property type="entry name" value="Poxvirus_T4p_N"/>
</dbReference>
<dbReference type="Pfam" id="PF04491">
    <property type="entry name" value="Pox_T4_N"/>
    <property type="match status" value="1"/>
</dbReference>
<dbReference type="PIRSF" id="PIRSF003796">
    <property type="entry name" value="Apoptosisregulator_M-T4"/>
    <property type="match status" value="1"/>
</dbReference>
<proteinExistence type="evidence at transcript level"/>
<feature type="signal peptide" evidence="1">
    <location>
        <begin position="1"/>
        <end position="17"/>
    </location>
</feature>
<feature type="chain" id="PRO_0000040611" description="Protein OPG195">
    <location>
        <begin position="18"/>
        <end position="77"/>
    </location>
</feature>
<comment type="induction">
    <text evidence="2">Expressed in the late phase of the viral replicative cycle.</text>
</comment>
<comment type="similarity">
    <text evidence="3">Belongs to the orthopoxvirus OPG195 family.</text>
</comment>
<protein>
    <recommendedName>
        <fullName>Protein OPG195</fullName>
    </recommendedName>
</protein>
<gene>
    <name type="primary">OPG195</name>
    <name type="ordered locus">VACWR191</name>
    <name type="ORF">B9R</name>
</gene>